<accession>P81712</accession>
<reference key="1">
    <citation type="journal article" date="1994" name="Biosci. Biotechnol. Biochem.">
        <title>Property and amino acid sequence of a subtilisin inhibitor from seeds of beach canavalia (Canavalia lineata).</title>
        <authorList>
            <person name="Katayama H."/>
            <person name="Soezima Y."/>
            <person name="Fujimura S."/>
            <person name="Terada S."/>
            <person name="Kimoto E."/>
        </authorList>
    </citation>
    <scope>PROTEIN SEQUENCE</scope>
    <scope>CHARACTERIZATION</scope>
    <source>
        <tissue>Seed</tissue>
    </source>
</reference>
<comment type="function">
    <text>Inhibits subtilisin-type microbial serine proteases including proteinase K, subtilisin BPN', subtilisin Carlsberg, subtilisin E, A.oryzae protease and S.griseus alkaline protease. Weakly inhibits pronase E. Does not inhibit trypsin or chymotrypsin.</text>
</comment>
<comment type="similarity">
    <text evidence="2">Belongs to the protease inhibitor I13 (potato type I serine protease inhibitor) family.</text>
</comment>
<feature type="chain" id="PRO_0000217642" description="Subtilisin inhibitor CLSI-I">
    <location>
        <begin position="1"/>
        <end position="65"/>
    </location>
</feature>
<feature type="site" description="Reactive bond" evidence="1">
    <location>
        <begin position="41"/>
        <end position="42"/>
    </location>
</feature>
<keyword id="KW-0903">Direct protein sequencing</keyword>
<keyword id="KW-0646">Protease inhibitor</keyword>
<keyword id="KW-0722">Serine protease inhibitor</keyword>
<dbReference type="PIR" id="JC2380">
    <property type="entry name" value="JC2380"/>
</dbReference>
<dbReference type="SMR" id="P81712"/>
<dbReference type="MEROPS" id="I13.007"/>
<dbReference type="GO" id="GO:0004867">
    <property type="term" value="F:serine-type endopeptidase inhibitor activity"/>
    <property type="evidence" value="ECO:0007669"/>
    <property type="project" value="UniProtKB-KW"/>
</dbReference>
<dbReference type="GO" id="GO:0009611">
    <property type="term" value="P:response to wounding"/>
    <property type="evidence" value="ECO:0007669"/>
    <property type="project" value="InterPro"/>
</dbReference>
<dbReference type="Gene3D" id="3.30.10.10">
    <property type="entry name" value="Trypsin Inhibitor V, subunit A"/>
    <property type="match status" value="1"/>
</dbReference>
<dbReference type="InterPro" id="IPR000864">
    <property type="entry name" value="Prot_inh_pot1"/>
</dbReference>
<dbReference type="InterPro" id="IPR036354">
    <property type="entry name" value="Prot_inh_pot1_sf"/>
</dbReference>
<dbReference type="PANTHER" id="PTHR33091">
    <property type="entry name" value="PROTEIN, PUTATIVE, EXPRESSED-RELATED"/>
    <property type="match status" value="1"/>
</dbReference>
<dbReference type="PANTHER" id="PTHR33091:SF29">
    <property type="entry name" value="SUBTILISIN INHIBITOR 1"/>
    <property type="match status" value="1"/>
</dbReference>
<dbReference type="Pfam" id="PF00280">
    <property type="entry name" value="potato_inhibit"/>
    <property type="match status" value="1"/>
</dbReference>
<dbReference type="PRINTS" id="PR00292">
    <property type="entry name" value="POTATOINHBTR"/>
</dbReference>
<dbReference type="SUPFAM" id="SSF54654">
    <property type="entry name" value="CI-2 family of serine protease inhibitors"/>
    <property type="match status" value="1"/>
</dbReference>
<dbReference type="PROSITE" id="PS00285">
    <property type="entry name" value="POTATO_INHIBITOR"/>
    <property type="match status" value="1"/>
</dbReference>
<organism>
    <name type="scientific">Canavalia lineata</name>
    <name type="common">Beach bean</name>
    <name type="synonym">Dolichos lineatus</name>
    <dbReference type="NCBI Taxonomy" id="28957"/>
    <lineage>
        <taxon>Eukaryota</taxon>
        <taxon>Viridiplantae</taxon>
        <taxon>Streptophyta</taxon>
        <taxon>Embryophyta</taxon>
        <taxon>Tracheophyta</taxon>
        <taxon>Spermatophyta</taxon>
        <taxon>Magnoliopsida</taxon>
        <taxon>eudicotyledons</taxon>
        <taxon>Gunneridae</taxon>
        <taxon>Pentapetalae</taxon>
        <taxon>rosids</taxon>
        <taxon>fabids</taxon>
        <taxon>Fabales</taxon>
        <taxon>Fabaceae</taxon>
        <taxon>Papilionoideae</taxon>
        <taxon>50 kb inversion clade</taxon>
        <taxon>NPAAA clade</taxon>
        <taxon>indigoferoid/millettioid clade</taxon>
        <taxon>Phaseoleae</taxon>
        <taxon>Canavalia</taxon>
    </lineage>
</organism>
<evidence type="ECO:0000250" key="1"/>
<evidence type="ECO:0000305" key="2"/>
<sequence length="65" mass="7192">STRKTSWPELVGVTAEEAEKIKEEMSGVEIQVVPPGSFVTADYKPQRVRLYVDESNKVTRTPGIG</sequence>
<name>ICI1_CANLI</name>
<protein>
    <recommendedName>
        <fullName>Subtilisin inhibitor CLSI-I</fullName>
    </recommendedName>
</protein>
<proteinExistence type="evidence at protein level"/>